<feature type="signal peptide">
    <location>
        <begin position="1"/>
        <end position="19"/>
    </location>
</feature>
<feature type="chain" id="PRO_0000021589" description="Leukosialin">
    <location>
        <begin position="20"/>
        <end position="395"/>
    </location>
</feature>
<feature type="chain" id="PRO_0000443407" description="CD43 cytoplasmic tail" evidence="15">
    <location>
        <begin position="272"/>
        <end position="395"/>
    </location>
</feature>
<feature type="topological domain" description="Extracellular" evidence="3">
    <location>
        <begin position="20"/>
        <end position="248"/>
    </location>
</feature>
<feature type="transmembrane region" description="Helical" evidence="3">
    <location>
        <begin position="249"/>
        <end position="271"/>
    </location>
</feature>
<feature type="topological domain" description="Cytoplasmic" evidence="3">
    <location>
        <begin position="272"/>
        <end position="395"/>
    </location>
</feature>
<feature type="region of interest" description="Disordered" evidence="4">
    <location>
        <begin position="27"/>
        <end position="245"/>
    </location>
</feature>
<feature type="region of interest" description="Required for interaction with EZR, MSN and RDX and for co-localization to microvilli" evidence="1">
    <location>
        <begin position="272"/>
        <end position="302"/>
    </location>
</feature>
<feature type="region of interest" description="Disordered" evidence="4">
    <location>
        <begin position="303"/>
        <end position="395"/>
    </location>
</feature>
<feature type="short sequence motif" description="Nuclear localization signal" evidence="2">
    <location>
        <begin position="276"/>
        <end position="290"/>
    </location>
</feature>
<feature type="compositionally biased region" description="Polar residues" evidence="4">
    <location>
        <begin position="27"/>
        <end position="56"/>
    </location>
</feature>
<feature type="compositionally biased region" description="Low complexity" evidence="4">
    <location>
        <begin position="73"/>
        <end position="88"/>
    </location>
</feature>
<feature type="compositionally biased region" description="Polar residues" evidence="4">
    <location>
        <begin position="89"/>
        <end position="111"/>
    </location>
</feature>
<feature type="compositionally biased region" description="Polar residues" evidence="4">
    <location>
        <begin position="145"/>
        <end position="154"/>
    </location>
</feature>
<feature type="compositionally biased region" description="Low complexity" evidence="4">
    <location>
        <begin position="155"/>
        <end position="166"/>
    </location>
</feature>
<feature type="compositionally biased region" description="Polar residues" evidence="4">
    <location>
        <begin position="167"/>
        <end position="196"/>
    </location>
</feature>
<feature type="compositionally biased region" description="Low complexity" evidence="4">
    <location>
        <begin position="205"/>
        <end position="241"/>
    </location>
</feature>
<feature type="compositionally biased region" description="Polar residues" evidence="4">
    <location>
        <begin position="327"/>
        <end position="338"/>
    </location>
</feature>
<feature type="compositionally biased region" description="Basic and acidic residues" evidence="4">
    <location>
        <begin position="385"/>
        <end position="395"/>
    </location>
</feature>
<feature type="modified residue" description="Phosphoserine" evidence="2">
    <location>
        <position position="285"/>
    </location>
</feature>
<feature type="modified residue" description="Phosphoserine" evidence="2">
    <location>
        <position position="328"/>
    </location>
</feature>
<feature type="modified residue" description="Phosphothreonine" evidence="2">
    <location>
        <position position="333"/>
    </location>
</feature>
<feature type="modified residue" description="Phosphoserine" evidence="16">
    <location>
        <position position="339"/>
    </location>
</feature>
<feature type="modified residue" description="Phosphoserine" evidence="8 16">
    <location>
        <position position="343"/>
    </location>
</feature>
<feature type="modified residue" description="Phosphoserine; by PKC/PRKCQ" evidence="12 16">
    <location>
        <position position="347"/>
    </location>
</feature>
<feature type="modified residue" description="Phosphoserine" evidence="16">
    <location>
        <position position="371"/>
    </location>
</feature>
<feature type="modified residue" description="Phosphothreonine" evidence="16">
    <location>
        <position position="378"/>
    </location>
</feature>
<feature type="glycosylation site" description="N-linked (GlcNAc...) asparagine" evidence="3">
    <location>
        <position position="167"/>
    </location>
</feature>
<feature type="mutagenesis site" description="Loss of phosphorylation, interaction with EZR and localization to the uropodium." evidence="12">
    <original>KRR</original>
    <variation>NGG</variation>
    <location>
        <begin position="276"/>
        <end position="278"/>
    </location>
</feature>
<feature type="mutagenesis site" description="Significant reduction in interaction with RDX." evidence="10">
    <original>R</original>
    <variation>A</variation>
    <location>
        <position position="278"/>
    </location>
</feature>
<feature type="mutagenesis site" description="No effect on its interaction with RDX." evidence="10">
    <original>T</original>
    <variation>A</variation>
    <location>
        <position position="279"/>
    </location>
</feature>
<feature type="mutagenesis site" description="Significant reduction in interaction with RDX." evidence="10">
    <original>L</original>
    <variation>A</variation>
    <location>
        <position position="282"/>
    </location>
</feature>
<feature type="mutagenesis site" description="Significant reduction in interaction with RDX." evidence="10">
    <original>L</original>
    <variation>A</variation>
    <location>
        <position position="284"/>
    </location>
</feature>
<feature type="mutagenesis site" description="Reduced phosphorylation. Significant loss of phosphorylation; when associated with A-347." evidence="8">
    <original>S</original>
    <variation>A</variation>
    <location>
        <position position="343"/>
    </location>
</feature>
<feature type="mutagenesis site" description="Reduced phosphorylation. Significant loss of phosphorylation; when associated with A-343." evidence="8 12">
    <original>S</original>
    <variation>A</variation>
    <location>
        <position position="347"/>
    </location>
</feature>
<feature type="mutagenesis site" description="No loss of phosphorylation or localization to the uropodium. Loss of interaction with EZR." evidence="12">
    <original>S</original>
    <variation>D</variation>
    <location>
        <position position="347"/>
    </location>
</feature>
<feature type="strand" evidence="17">
    <location>
        <begin position="280"/>
        <end position="283"/>
    </location>
</feature>
<feature type="turn" evidence="17">
    <location>
        <begin position="285"/>
        <end position="288"/>
    </location>
</feature>
<accession>P15702</accession>
<dbReference type="EMBL" id="X17018">
    <property type="protein sequence ID" value="CAA34884.1"/>
    <property type="molecule type" value="Genomic_DNA"/>
</dbReference>
<dbReference type="EMBL" id="X52609">
    <property type="protein sequence ID" value="CAA36840.1"/>
    <property type="molecule type" value="Genomic_DNA"/>
</dbReference>
<dbReference type="EMBL" id="S70677">
    <property type="protein sequence ID" value="AAB30765.1"/>
    <property type="molecule type" value="mRNA"/>
</dbReference>
<dbReference type="EMBL" id="M30693">
    <property type="protein sequence ID" value="AAA39457.1"/>
    <property type="molecule type" value="mRNA"/>
</dbReference>
<dbReference type="CCDS" id="CCDS21858.1"/>
<dbReference type="PIR" id="A43545">
    <property type="entry name" value="A43545"/>
</dbReference>
<dbReference type="RefSeq" id="NP_001032899.1">
    <property type="nucleotide sequence ID" value="NM_001037810.2"/>
</dbReference>
<dbReference type="RefSeq" id="NP_033285.1">
    <property type="nucleotide sequence ID" value="NM_009259.5"/>
</dbReference>
<dbReference type="RefSeq" id="XP_006507585.1">
    <property type="nucleotide sequence ID" value="XM_006507522.5"/>
</dbReference>
<dbReference type="PDB" id="2EMS">
    <property type="method" value="X-ray"/>
    <property type="resolution" value="2.90 A"/>
    <property type="chains" value="B=272-291"/>
</dbReference>
<dbReference type="PDBsum" id="2EMS"/>
<dbReference type="SMR" id="P15702"/>
<dbReference type="BioGRID" id="203456">
    <property type="interactions" value="1"/>
</dbReference>
<dbReference type="FunCoup" id="P15702">
    <property type="interactions" value="232"/>
</dbReference>
<dbReference type="STRING" id="10090.ENSMUSP00000049534"/>
<dbReference type="GlyCosmos" id="P15702">
    <property type="glycosylation" value="1 site, No reported glycans"/>
</dbReference>
<dbReference type="GlyGen" id="P15702">
    <property type="glycosylation" value="1 site"/>
</dbReference>
<dbReference type="iPTMnet" id="P15702"/>
<dbReference type="PhosphoSitePlus" id="P15702"/>
<dbReference type="jPOST" id="P15702"/>
<dbReference type="PaxDb" id="10090-ENSMUSP00000049534"/>
<dbReference type="PeptideAtlas" id="P15702"/>
<dbReference type="ProteomicsDB" id="265062"/>
<dbReference type="Antibodypedia" id="3627">
    <property type="antibodies" value="2347 antibodies from 48 providers"/>
</dbReference>
<dbReference type="DNASU" id="20737"/>
<dbReference type="Ensembl" id="ENSMUST00000049931.6">
    <property type="protein sequence ID" value="ENSMUSP00000049534.6"/>
    <property type="gene ID" value="ENSMUSG00000051457.8"/>
</dbReference>
<dbReference type="Ensembl" id="ENSMUST00000143713.2">
    <property type="protein sequence ID" value="ENSMUSP00000122787.2"/>
    <property type="gene ID" value="ENSMUSG00000051457.8"/>
</dbReference>
<dbReference type="GeneID" id="20737"/>
<dbReference type="KEGG" id="mmu:20737"/>
<dbReference type="UCSC" id="uc009juh.2">
    <property type="organism name" value="mouse"/>
</dbReference>
<dbReference type="AGR" id="MGI:98384"/>
<dbReference type="CTD" id="6693"/>
<dbReference type="MGI" id="MGI:98384">
    <property type="gene designation" value="Spn"/>
</dbReference>
<dbReference type="VEuPathDB" id="HostDB:ENSMUSG00000051457"/>
<dbReference type="eggNOG" id="ENOG502SBHY">
    <property type="taxonomic scope" value="Eukaryota"/>
</dbReference>
<dbReference type="GeneTree" id="ENSGT00390000017626"/>
<dbReference type="HOGENOM" id="CLU_038831_0_1_1"/>
<dbReference type="InParanoid" id="P15702"/>
<dbReference type="OMA" id="FKMSSMP"/>
<dbReference type="OrthoDB" id="9666309at2759"/>
<dbReference type="PhylomeDB" id="P15702"/>
<dbReference type="TreeFam" id="TF337688"/>
<dbReference type="Reactome" id="R-MMU-202733">
    <property type="pathway name" value="Cell surface interactions at the vascular wall"/>
</dbReference>
<dbReference type="Reactome" id="R-MMU-210991">
    <property type="pathway name" value="Basigin interactions"/>
</dbReference>
<dbReference type="BioGRID-ORCS" id="20737">
    <property type="hits" value="3 hits in 77 CRISPR screens"/>
</dbReference>
<dbReference type="ChiTaRS" id="Spn">
    <property type="organism name" value="mouse"/>
</dbReference>
<dbReference type="PRO" id="PR:P15702"/>
<dbReference type="Proteomes" id="UP000000589">
    <property type="component" value="Chromosome 7"/>
</dbReference>
<dbReference type="RNAct" id="P15702">
    <property type="molecule type" value="protein"/>
</dbReference>
<dbReference type="Bgee" id="ENSMUSG00000051457">
    <property type="expression patterns" value="Expressed in ectoplacental cone and 158 other cell types or tissues"/>
</dbReference>
<dbReference type="ExpressionAtlas" id="P15702">
    <property type="expression patterns" value="baseline and differential"/>
</dbReference>
<dbReference type="GO" id="GO:0005604">
    <property type="term" value="C:basement membrane"/>
    <property type="evidence" value="ECO:0000314"/>
    <property type="project" value="MGI"/>
</dbReference>
<dbReference type="GO" id="GO:0009897">
    <property type="term" value="C:external side of plasma membrane"/>
    <property type="evidence" value="ECO:0000314"/>
    <property type="project" value="MGI"/>
</dbReference>
<dbReference type="GO" id="GO:0005615">
    <property type="term" value="C:extracellular space"/>
    <property type="evidence" value="ECO:0000266"/>
    <property type="project" value="MGI"/>
</dbReference>
<dbReference type="GO" id="GO:0005902">
    <property type="term" value="C:microvillus"/>
    <property type="evidence" value="ECO:0000250"/>
    <property type="project" value="UniProtKB"/>
</dbReference>
<dbReference type="GO" id="GO:0005886">
    <property type="term" value="C:plasma membrane"/>
    <property type="evidence" value="ECO:0000314"/>
    <property type="project" value="MGI"/>
</dbReference>
<dbReference type="GO" id="GO:0016605">
    <property type="term" value="C:PML body"/>
    <property type="evidence" value="ECO:0007669"/>
    <property type="project" value="UniProtKB-SubCell"/>
</dbReference>
<dbReference type="GO" id="GO:0001931">
    <property type="term" value="C:uropod"/>
    <property type="evidence" value="ECO:0000314"/>
    <property type="project" value="UniProtKB"/>
</dbReference>
<dbReference type="GO" id="GO:0031072">
    <property type="term" value="F:heat shock protein binding"/>
    <property type="evidence" value="ECO:0000353"/>
    <property type="project" value="CAFA"/>
</dbReference>
<dbReference type="GO" id="GO:0030544">
    <property type="term" value="F:Hsp70 protein binding"/>
    <property type="evidence" value="ECO:0007669"/>
    <property type="project" value="Ensembl"/>
</dbReference>
<dbReference type="GO" id="GO:0004888">
    <property type="term" value="F:transmembrane signaling receptor activity"/>
    <property type="evidence" value="ECO:0007669"/>
    <property type="project" value="InterPro"/>
</dbReference>
<dbReference type="GO" id="GO:0097190">
    <property type="term" value="P:apoptotic signaling pathway"/>
    <property type="evidence" value="ECO:0000314"/>
    <property type="project" value="MGI"/>
</dbReference>
<dbReference type="GO" id="GO:0007166">
    <property type="term" value="P:cell surface receptor signaling pathway"/>
    <property type="evidence" value="ECO:0000314"/>
    <property type="project" value="MGI"/>
</dbReference>
<dbReference type="GO" id="GO:0042742">
    <property type="term" value="P:defense response to bacterium"/>
    <property type="evidence" value="ECO:0000315"/>
    <property type="project" value="MGI"/>
</dbReference>
<dbReference type="GO" id="GO:0050901">
    <property type="term" value="P:leukocyte tethering or rolling"/>
    <property type="evidence" value="ECO:0000315"/>
    <property type="project" value="UniProtKB"/>
</dbReference>
<dbReference type="GO" id="GO:0007162">
    <property type="term" value="P:negative regulation of cell adhesion"/>
    <property type="evidence" value="ECO:0000314"/>
    <property type="project" value="MGI"/>
</dbReference>
<dbReference type="GO" id="GO:0050868">
    <property type="term" value="P:negative regulation of T cell activation"/>
    <property type="evidence" value="ECO:0000315"/>
    <property type="project" value="MGI"/>
</dbReference>
<dbReference type="GO" id="GO:0042130">
    <property type="term" value="P:negative regulation of T cell proliferation"/>
    <property type="evidence" value="ECO:0000315"/>
    <property type="project" value="UniProtKB"/>
</dbReference>
<dbReference type="GO" id="GO:0001808">
    <property type="term" value="P:negative regulation of type IV hypersensitivity"/>
    <property type="evidence" value="ECO:0000315"/>
    <property type="project" value="MGI"/>
</dbReference>
<dbReference type="GO" id="GO:0045060">
    <property type="term" value="P:negative thymic T cell selection"/>
    <property type="evidence" value="ECO:0000315"/>
    <property type="project" value="MGI"/>
</dbReference>
<dbReference type="GO" id="GO:2000406">
    <property type="term" value="P:positive regulation of T cell migration"/>
    <property type="evidence" value="ECO:0000315"/>
    <property type="project" value="UniProtKB"/>
</dbReference>
<dbReference type="GO" id="GO:0042102">
    <property type="term" value="P:positive regulation of T cell proliferation"/>
    <property type="evidence" value="ECO:0000314"/>
    <property type="project" value="MGI"/>
</dbReference>
<dbReference type="GO" id="GO:0032760">
    <property type="term" value="P:positive regulation of tumor necrosis factor production"/>
    <property type="evidence" value="ECO:0000315"/>
    <property type="project" value="MGI"/>
</dbReference>
<dbReference type="GO" id="GO:0050688">
    <property type="term" value="P:regulation of defense response to virus"/>
    <property type="evidence" value="ECO:0000315"/>
    <property type="project" value="MGI"/>
</dbReference>
<dbReference type="GO" id="GO:0050776">
    <property type="term" value="P:regulation of immune response"/>
    <property type="evidence" value="ECO:0000315"/>
    <property type="project" value="MGI"/>
</dbReference>
<dbReference type="GO" id="GO:2000404">
    <property type="term" value="P:regulation of T cell migration"/>
    <property type="evidence" value="ECO:0000315"/>
    <property type="project" value="UniProtKB"/>
</dbReference>
<dbReference type="GO" id="GO:0001562">
    <property type="term" value="P:response to protozoan"/>
    <property type="evidence" value="ECO:0000314"/>
    <property type="project" value="MGI"/>
</dbReference>
<dbReference type="GO" id="GO:0031295">
    <property type="term" value="P:T cell costimulation"/>
    <property type="evidence" value="ECO:0000314"/>
    <property type="project" value="MGI"/>
</dbReference>
<dbReference type="GO" id="GO:0042098">
    <property type="term" value="P:T cell proliferation"/>
    <property type="evidence" value="ECO:0000314"/>
    <property type="project" value="MGI"/>
</dbReference>
<dbReference type="GO" id="GO:0002296">
    <property type="term" value="P:T-helper 1 cell lineage commitment"/>
    <property type="evidence" value="ECO:0000250"/>
    <property type="project" value="UniProtKB"/>
</dbReference>
<dbReference type="IDEAL" id="IID50200"/>
<dbReference type="InterPro" id="IPR038829">
    <property type="entry name" value="Leukosialin"/>
</dbReference>
<dbReference type="PANTHER" id="PTHR35265">
    <property type="entry name" value="LEUKOSIALIN"/>
    <property type="match status" value="1"/>
</dbReference>
<dbReference type="PANTHER" id="PTHR35265:SF1">
    <property type="entry name" value="LEUKOSIALIN"/>
    <property type="match status" value="1"/>
</dbReference>
<protein>
    <recommendedName>
        <fullName>Leukosialin</fullName>
    </recommendedName>
    <alternativeName>
        <fullName>B-cell differentiation antigen LP-3</fullName>
    </alternativeName>
    <alternativeName>
        <fullName>Leukocyte sialoglycoprotein</fullName>
    </alternativeName>
    <alternativeName>
        <fullName>Lymphocyte antigen 48</fullName>
        <shortName>Ly-48</shortName>
    </alternativeName>
    <alternativeName>
        <fullName>Sialophorin</fullName>
    </alternativeName>
    <cdAntigenName>CD43</cdAntigenName>
    <component>
        <recommendedName>
            <fullName evidence="14">CD43 cytoplasmic tail</fullName>
            <shortName evidence="14">CD43-ct</shortName>
            <shortName evidence="14">CD43ct</shortName>
        </recommendedName>
    </component>
</protein>
<reference key="1">
    <citation type="journal article" date="1990" name="Eur. J. Immunol.">
        <title>Protein sequence and gene structure for mouse leukosialin (CD43), a T lymphocyte mucin without introns in the coding sequence.</title>
        <authorList>
            <person name="Cyster J.G."/>
            <person name="Somoza C."/>
            <person name="Killeen N."/>
            <person name="Williams A.F."/>
        </authorList>
    </citation>
    <scope>NUCLEOTIDE SEQUENCE [GENOMIC DNA]</scope>
    <source>
        <strain>DBA/2J</strain>
        <tissue>Liver</tissue>
    </source>
</reference>
<reference key="2">
    <citation type="journal article" date="1990" name="Nucleic Acids Res.">
        <title>The nucleotide sequence of Ly 48 (mouse leukosialin, sialophorin): the mouse homolog of CD43.</title>
        <authorList>
            <person name="Dorfman K.S."/>
            <person name="Litaker K.S."/>
            <person name="Baecher C.M."/>
            <person name="Frelinger J.G."/>
        </authorList>
    </citation>
    <scope>NUCLEOTIDE SEQUENCE [GENOMIC DNA]</scope>
    <source>
        <strain>B10.P</strain>
        <tissue>Liver</tissue>
    </source>
</reference>
<reference key="3">
    <citation type="journal article" date="1994" name="Cell. Immunol.">
        <title>A unique murine CD43 epitope Lp-3: distinct distribution from another CD43 epitope S7.</title>
        <authorList>
            <person name="Shiota J."/>
            <person name="Nishimura H."/>
            <person name="Okamoto H."/>
            <person name="Yu B."/>
            <person name="Hattori S."/>
            <person name="Abe M."/>
            <person name="Okada T."/>
            <person name="Nozawa S."/>
            <person name="Tsurui H."/>
            <person name="Hirose S."/>
        </authorList>
    </citation>
    <scope>NUCLEOTIDE SEQUENCE [MRNA]</scope>
    <scope>PARTIAL PROTEIN SEQUENCE</scope>
</reference>
<reference key="4">
    <citation type="journal article" date="1990" name="Immunogenetics">
        <title>cDNA cloning and localization of the mouse leukosialin gene (Ly48) to chromosome 7.</title>
        <authorList>
            <person name="Baecher C.M."/>
            <person name="Dorfman K.S."/>
            <person name="Mattei M.-G."/>
            <person name="Frelinger J.G."/>
        </authorList>
    </citation>
    <scope>NUCLEOTIDE SEQUENCE [MRNA] OF 345-383</scope>
    <source>
        <strain>C57BL/6J</strain>
    </source>
</reference>
<reference key="5">
    <citation type="journal article" date="2000" name="Cell. Immunol.">
        <title>Identification and cloning of a CD43-associated serine/threonine kinase.</title>
        <authorList>
            <person name="Wang W."/>
            <person name="Link V."/>
            <person name="Green J.M."/>
        </authorList>
    </citation>
    <scope>INTERACTION WITH HIPK2</scope>
</reference>
<reference key="6">
    <citation type="journal article" date="2001" name="J. Immunol.">
        <title>CD43 functions as a T cell counterreceptor for the macrophage adhesion receptor sialoadhesin (Siglec-1).</title>
        <authorList>
            <person name="van den Berg T.K."/>
            <person name="Nath D."/>
            <person name="Ziltener H.J."/>
            <person name="Vestweber D."/>
            <person name="Fukuda M."/>
            <person name="van Die I."/>
            <person name="Crocker P.R."/>
        </authorList>
    </citation>
    <scope>FUNCTION</scope>
    <scope>INTERACTION WITH SIGLEC1</scope>
</reference>
<reference key="7">
    <citation type="journal article" date="2001" name="Immunity">
        <title>ERM-dependent movement of CD43 defines a novel protein complex distal to the immunological synapse.</title>
        <authorList>
            <person name="Allenspach E.J."/>
            <person name="Cullinan P."/>
            <person name="Tong J."/>
            <person name="Tang Q."/>
            <person name="Tesciuba A.G."/>
            <person name="Cannon J.L."/>
            <person name="Takahashi S.M."/>
            <person name="Morgan R."/>
            <person name="Burkhardt J.K."/>
            <person name="Sperling A.I."/>
        </authorList>
    </citation>
    <scope>FUNCTION</scope>
</reference>
<reference key="8">
    <citation type="journal article" date="2007" name="Blood">
        <title>Signaling through CD43 regulates CD4 T-cell trafficking.</title>
        <authorList>
            <person name="Mody P.D."/>
            <person name="Cannon J.L."/>
            <person name="Bandukwala H.S."/>
            <person name="Blaine K.M."/>
            <person name="Schilling A.B."/>
            <person name="Swier K."/>
            <person name="Sperling A.I."/>
        </authorList>
    </citation>
    <scope>FUNCTION</scope>
    <scope>PHOSPHORYLATION AT SER-343 AND SER-347</scope>
    <scope>MUTAGENESIS OF SER-343 AND SER-347</scope>
</reference>
<reference key="9">
    <citation type="journal article" date="2008" name="J. Immunol.">
        <title>CD43 regulates Th2 differentiation and inflammation.</title>
        <authorList>
            <person name="Cannon J.L."/>
            <person name="Collins A."/>
            <person name="Mody P.D."/>
            <person name="Balachandran D."/>
            <person name="Henriksen K.J."/>
            <person name="Smith C.E."/>
            <person name="Tong J."/>
            <person name="Clay B.S."/>
            <person name="Miller S.D."/>
            <person name="Sperling A.I."/>
        </authorList>
    </citation>
    <scope>FUNCTION</scope>
</reference>
<reference key="10">
    <citation type="journal article" date="2009" name="Blood">
        <title>CD43 processing and nuclear translocation of CD43 cytoplasmic tail are required for cell homeostasis.</title>
        <authorList>
            <person name="Seo W."/>
            <person name="Ziltener H.J."/>
        </authorList>
    </citation>
    <scope>FUNCTION</scope>
    <scope>PROTEOLYTIC PROCESSING</scope>
    <scope>SUBCELLULAR LOCATION</scope>
    <scope>SUMOYLATION</scope>
</reference>
<reference key="11">
    <citation type="journal article" date="2010" name="Cell">
        <title>A tissue-specific atlas of mouse protein phosphorylation and expression.</title>
        <authorList>
            <person name="Huttlin E.L."/>
            <person name="Jedrychowski M.P."/>
            <person name="Elias J.E."/>
            <person name="Goswami T."/>
            <person name="Rad R."/>
            <person name="Beausoleil S.A."/>
            <person name="Villen J."/>
            <person name="Haas W."/>
            <person name="Sowa M.E."/>
            <person name="Gygi S.P."/>
        </authorList>
    </citation>
    <scope>PHOSPHORYLATION [LARGE SCALE ANALYSIS] AT SER-339; SER-343; SER-347; SER-371 AND THR-378</scope>
    <scope>IDENTIFICATION BY MASS SPECTROMETRY [LARGE SCALE ANALYSIS]</scope>
    <source>
        <tissue>Lung</tissue>
        <tissue>Spleen</tissue>
    </source>
</reference>
<reference key="12">
    <citation type="journal article" date="2011" name="Mol. Biol. Cell">
        <title>CD43 interaction with ezrin-radixin-moesin (ERM) proteins regulates T-cell trafficking and CD43 phosphorylation.</title>
        <authorList>
            <person name="Cannon J.L."/>
            <person name="Mody P.D."/>
            <person name="Blaine K.M."/>
            <person name="Chen E.J."/>
            <person name="Nelson A.D."/>
            <person name="Sayles L.J."/>
            <person name="Moore T.V."/>
            <person name="Clay B.S."/>
            <person name="Dulin N.O."/>
            <person name="Shilling R.A."/>
            <person name="Burkhardt J.K."/>
            <person name="Sperling A.I."/>
        </authorList>
    </citation>
    <scope>FUNCTION</scope>
    <scope>PHOSPHORYLATION AT SER-347</scope>
    <scope>MUTAGENESIS OF SER-347 AND 276-LYS--ARG-278</scope>
    <scope>SUBCELLULAR LOCATION</scope>
    <scope>INTERACTION WITH EZR</scope>
</reference>
<reference key="13">
    <citation type="journal article" date="2016" name="J. Immunol.">
        <title>CD43 functions as an E-selectin ligand for Th17 cells in vitro and is required for rolling on the vascular endothelium and Th17 cell recruitment during inflammation in vivo.</title>
        <authorList>
            <person name="Velazquez F."/>
            <person name="Grodecki-Pena A."/>
            <person name="Knapp A."/>
            <person name="Salvador A.M."/>
            <person name="Nevers T."/>
            <person name="Croce K."/>
            <person name="Alcaide P."/>
        </authorList>
    </citation>
    <scope>FUNCTION</scope>
</reference>
<reference key="14">
    <citation type="journal article" date="2008" name="J. Mol. Biol.">
        <title>Structural basis of the cytoplasmic tail of adhesion molecule CD43 and its binding to ERM proteins.</title>
        <authorList>
            <person name="Takai Y."/>
            <person name="Kitano K."/>
            <person name="Terawaki S."/>
            <person name="Maesaki R."/>
            <person name="Hakoshima T."/>
        </authorList>
    </citation>
    <scope>X-RAY CRYSTALLOGRAPHY (2.9 ANGSTROMS) OF 272-291 IN COMPLEX WITH RDX</scope>
    <scope>SUBUNIT</scope>
    <scope>MUTAGENESIS OF ARG-278; THR-279; LEU-282 AND LEU-284</scope>
</reference>
<name>LEUK_MOUSE</name>
<evidence type="ECO:0000250" key="1">
    <source>
        <dbReference type="UniProtKB" id="P13838"/>
    </source>
</evidence>
<evidence type="ECO:0000250" key="2">
    <source>
        <dbReference type="UniProtKB" id="P16150"/>
    </source>
</evidence>
<evidence type="ECO:0000255" key="3"/>
<evidence type="ECO:0000256" key="4">
    <source>
        <dbReference type="SAM" id="MobiDB-lite"/>
    </source>
</evidence>
<evidence type="ECO:0000269" key="5">
    <source>
    </source>
</evidence>
<evidence type="ECO:0000269" key="6">
    <source>
    </source>
</evidence>
<evidence type="ECO:0000269" key="7">
    <source>
    </source>
</evidence>
<evidence type="ECO:0000269" key="8">
    <source>
    </source>
</evidence>
<evidence type="ECO:0000269" key="9">
    <source>
    </source>
</evidence>
<evidence type="ECO:0000269" key="10">
    <source>
    </source>
</evidence>
<evidence type="ECO:0000269" key="11">
    <source>
    </source>
</evidence>
<evidence type="ECO:0000269" key="12">
    <source>
    </source>
</evidence>
<evidence type="ECO:0000269" key="13">
    <source>
    </source>
</evidence>
<evidence type="ECO:0000303" key="14">
    <source>
    </source>
</evidence>
<evidence type="ECO:0000305" key="15">
    <source>
    </source>
</evidence>
<evidence type="ECO:0007744" key="16">
    <source>
    </source>
</evidence>
<evidence type="ECO:0007829" key="17">
    <source>
        <dbReference type="PDB" id="2EMS"/>
    </source>
</evidence>
<keyword id="KW-0002">3D-structure</keyword>
<keyword id="KW-0966">Cell projection</keyword>
<keyword id="KW-0903">Direct protein sequencing</keyword>
<keyword id="KW-0325">Glycoprotein</keyword>
<keyword id="KW-0472">Membrane</keyword>
<keyword id="KW-0539">Nucleus</keyword>
<keyword id="KW-0597">Phosphoprotein</keyword>
<keyword id="KW-1185">Reference proteome</keyword>
<keyword id="KW-0732">Signal</keyword>
<keyword id="KW-0812">Transmembrane</keyword>
<keyword id="KW-1133">Transmembrane helix</keyword>
<keyword id="KW-0832">Ubl conjugation</keyword>
<gene>
    <name type="primary">Spn</name>
</gene>
<organism>
    <name type="scientific">Mus musculus</name>
    <name type="common">Mouse</name>
    <dbReference type="NCBI Taxonomy" id="10090"/>
    <lineage>
        <taxon>Eukaryota</taxon>
        <taxon>Metazoa</taxon>
        <taxon>Chordata</taxon>
        <taxon>Craniata</taxon>
        <taxon>Vertebrata</taxon>
        <taxon>Euteleostomi</taxon>
        <taxon>Mammalia</taxon>
        <taxon>Eutheria</taxon>
        <taxon>Euarchontoglires</taxon>
        <taxon>Glires</taxon>
        <taxon>Rodentia</taxon>
        <taxon>Myomorpha</taxon>
        <taxon>Muroidea</taxon>
        <taxon>Muridae</taxon>
        <taxon>Murinae</taxon>
        <taxon>Mus</taxon>
        <taxon>Mus</taxon>
    </lineage>
</organism>
<proteinExistence type="evidence at protein level"/>
<sequence>MALHLLLLFGACWVQVASPDSLQRTTMLPSTPHITAPSTSEAQNASPSVSVGSGTVDSKETISPWGQTTIPVSLTPLETTELSSLETSAGASMSTPVPEPTASQEVSSKTSALLPEPSNVASDPPVTAANPVTDGPAANPVTDGTAASTSISKGTSAPPTTVTTSSNETSGPSVATTVSSKTSGPPVTTATGSLGPSSEMHGLPATTATSSVESSSVARGTSVSSRKTSTTSTQDPITTRSPSQESSGMLLVPMLIALVVVLALVALLLLWRQRQKRRTGALTLSGGGKRNGVVDAWAGPARVPDEEATTTSGAGGNKGSEVLETEGSGQRPTLTTFFSRRKSRQGSLVLEELKPGSGPNLKGEEEPLVGSEDEAVETPTSDGPQAKDEAAPQSL</sequence>
<comment type="function">
    <text evidence="2 6 7 8 9 12 13">Predominant cell surface sialoprotein of leukocytes which regulates multiple T-cell functions, including T-cell activation, proliferation, differentiation, trafficking and migration. Positively regulates T-cell trafficking to lymph-nodes via its association with ERM proteins (EZR, RDX and MSN) (PubMed:11728336, PubMed:17638845, PubMed:21289089). Negatively regulates Th2 cell differentiation and predisposes the differentiation of T-cells towards a Th1 lineage commitment (PubMed:18490738). Promotes the expression of IFN-gamma by T-cells during T-cell receptor (TCR) activation of naive cells and induces the expression of IFN-gamma by CD4(+) T-cells and to a lesser extent by CD8(+) T-cells. Plays a role in preparing T-cells for cytokine sensing and differentiation into effector cells by inducing the expression of cytokine receptors IFNGR and IL4R, promoting IFNGR and IL4R signaling and by mediating the clustering of IFNGR with TCR (By similarity). Acts as a major E-selectin ligand responsible for Th17 cell rolling on activated vasculature and recruitment during inflammation. Mediates Th17 cells, but not Th1 cells, adhesion to E-selectin (PubMed:26700769). Acts as a T-cell counter-receptor for SIGLEC1 (PubMed:11238599).</text>
</comment>
<comment type="function">
    <molecule>CD43 cytoplasmic tail</molecule>
    <text evidence="11">Protects cells from apoptotic signals, promoting cell survival.</text>
</comment>
<comment type="subunit">
    <text evidence="6">Interacts with SIGLEC1.</text>
</comment>
<comment type="subunit">
    <molecule>CD43 cytoplasmic tail</molecule>
    <text evidence="1 2 5 10 12">Interacts with isoform 2 of HIPK2 (PubMed:11078605). Interacts with CTNNB1 (By similarity). Interacts with RDX (via FERM domain) (PubMed:18614175). Interacts with EZR (PubMed:21289089). Interacts with MSN (By similarity) (PubMed:18614175, PubMed:21289089).</text>
</comment>
<comment type="subcellular location">
    <subcellularLocation>
        <location evidence="3">Membrane</location>
        <topology evidence="3">Single-pass type I membrane protein</topology>
    </subcellularLocation>
    <subcellularLocation>
        <location evidence="1">Cell projection</location>
        <location evidence="1">Microvillus</location>
    </subcellularLocation>
    <subcellularLocation>
        <location evidence="12">Cell projection</location>
        <location evidence="12">Uropodium</location>
    </subcellularLocation>
    <text evidence="1 12">Localizes to the uropodium and microvilli via its interaction with ERM proteins (EZR, RDX and MSN).</text>
</comment>
<comment type="subcellular location">
    <molecule>CD43 cytoplasmic tail</molecule>
    <subcellularLocation>
        <location evidence="11">Nucleus</location>
    </subcellularLocation>
    <subcellularLocation>
        <location evidence="11">Nucleus</location>
        <location evidence="11">PML body</location>
    </subcellularLocation>
    <text evidence="11">The sumoylated form localizes to the PML body.</text>
</comment>
<comment type="tissue specificity">
    <text>Cell surface of thymocytes, T-lymphocytes, neutrophils, plasma cells and myelomas.</text>
</comment>
<comment type="PTM">
    <text evidence="8 12">Phosphorylation at Ser-347 is regulated by chemokines, requires its association with ERM proteins (EZR, RDX and MSN) and is essential for its function in the regulation of T-cell trafficking to lymph nodes.</text>
</comment>
<comment type="PTM">
    <text>Has a high content of sialic acid and O-linked carbohydrate structures.</text>
</comment>
<comment type="PTM">
    <text evidence="11">Cleavage by CTSG releases its extracellular domain and triggers its intramembrane proteolysis by gamma-secretase releasing the CD43 cytoplasmic tail chain (CD43-ct) which translocates to the nucleus.</text>
</comment>
<comment type="PTM">
    <molecule>CD43 cytoplasmic tail</molecule>
    <text evidence="11">Sumoylated.</text>
</comment>